<proteinExistence type="inferred from homology"/>
<keyword id="KW-0963">Cytoplasm</keyword>
<keyword id="KW-0251">Elongation factor</keyword>
<keyword id="KW-0342">GTP-binding</keyword>
<keyword id="KW-0547">Nucleotide-binding</keyword>
<keyword id="KW-0648">Protein biosynthesis</keyword>
<keyword id="KW-1185">Reference proteome</keyword>
<evidence type="ECO:0000255" key="1">
    <source>
        <dbReference type="HAMAP-Rule" id="MF_00054"/>
    </source>
</evidence>
<sequence>MVRATPIHRYRNIGIMAHIDAGKTTTSERILFYAGVCHQMGEVHDGAAVMDWMEQEQERGITITSAATTVFWSGMDKSMPQHRFNIIDTPGHVDFTIEVERSLRVLDGAVFVLCAVGGVQPQSETVWRQANKYFVPRMAFVNKMDRTGANFDKVVEQLKARLGAYPVPMQVPIGAEDGFEGVIDLLKMKAIHWDAASQGTVFEYRDIPIELVDKASKARAFMVEAAAEATEELMDKYLNEGELKEQEILEGLRERTLKVEIIPVFCGSAFKNKGVQAMLDGVIHLLPSPADRPPVQGLDEKGNECRCKASDSEPFSALAFKIMTDPFVGSLTFFRVYSGVLNSGDQVYNSVKLKKERVGRILQMHSNQRDEIKEVRAGDIAAAVGLKDVTTGDTLCDQNHIITLERMIFPEPVISMAVEPKTKSDQEKMGMALGRLAQEDPSFRVKTDEESGQTIISGMGELHLDIIVDRMRREFNVEANVGKPQVAYRETIRKSDVKSDYKHVKQSGGKGQYGHVVIEISPMSDVDKQHPDVKGDFLFINEITGGVIPKEFISPIEKGLRETITSGPLAGFPVVGVKVKLVFGSYHDVDSSEMAFKLAASMAFKQGFAKANPVLLEPIMKVEIVSPEDYLGDIMGDVSRRRGVLQGQDDSLSGKVINAMIPLGEMFGYATSLRSMTQGRATFAMEFDHYEEAPTNIADTVIKKT</sequence>
<organism>
    <name type="scientific">Xylella fastidiosa (strain Temecula1 / ATCC 700964)</name>
    <dbReference type="NCBI Taxonomy" id="183190"/>
    <lineage>
        <taxon>Bacteria</taxon>
        <taxon>Pseudomonadati</taxon>
        <taxon>Pseudomonadota</taxon>
        <taxon>Gammaproteobacteria</taxon>
        <taxon>Lysobacterales</taxon>
        <taxon>Lysobacteraceae</taxon>
        <taxon>Xylella</taxon>
    </lineage>
</organism>
<protein>
    <recommendedName>
        <fullName evidence="1">Elongation factor G</fullName>
        <shortName evidence="1">EF-G</shortName>
    </recommendedName>
</protein>
<accession>Q87A35</accession>
<reference key="1">
    <citation type="journal article" date="2003" name="J. Bacteriol.">
        <title>Comparative analyses of the complete genome sequences of Pierce's disease and citrus variegated chlorosis strains of Xylella fastidiosa.</title>
        <authorList>
            <person name="Van Sluys M.A."/>
            <person name="de Oliveira M.C."/>
            <person name="Monteiro-Vitorello C.B."/>
            <person name="Miyaki C.Y."/>
            <person name="Furlan L.R."/>
            <person name="Camargo L.E.A."/>
            <person name="da Silva A.C.R."/>
            <person name="Moon D.H."/>
            <person name="Takita M.A."/>
            <person name="Lemos E.G.M."/>
            <person name="Machado M.A."/>
            <person name="Ferro M.I.T."/>
            <person name="da Silva F.R."/>
            <person name="Goldman M.H.S."/>
            <person name="Goldman G.H."/>
            <person name="Lemos M.V.F."/>
            <person name="El-Dorry H."/>
            <person name="Tsai S.M."/>
            <person name="Carrer H."/>
            <person name="Carraro D.M."/>
            <person name="de Oliveira R.C."/>
            <person name="Nunes L.R."/>
            <person name="Siqueira W.J."/>
            <person name="Coutinho L.L."/>
            <person name="Kimura E.T."/>
            <person name="Ferro E.S."/>
            <person name="Harakava R."/>
            <person name="Kuramae E.E."/>
            <person name="Marino C.L."/>
            <person name="Giglioti E."/>
            <person name="Abreu I.L."/>
            <person name="Alves L.M.C."/>
            <person name="do Amaral A.M."/>
            <person name="Baia G.S."/>
            <person name="Blanco S.R."/>
            <person name="Brito M.S."/>
            <person name="Cannavan F.S."/>
            <person name="Celestino A.V."/>
            <person name="da Cunha A.F."/>
            <person name="Fenille R.C."/>
            <person name="Ferro J.A."/>
            <person name="Formighieri E.F."/>
            <person name="Kishi L.T."/>
            <person name="Leoni S.G."/>
            <person name="Oliveira A.R."/>
            <person name="Rosa V.E. Jr."/>
            <person name="Sassaki F.T."/>
            <person name="Sena J.A.D."/>
            <person name="de Souza A.A."/>
            <person name="Truffi D."/>
            <person name="Tsukumo F."/>
            <person name="Yanai G.M."/>
            <person name="Zaros L.G."/>
            <person name="Civerolo E.L."/>
            <person name="Simpson A.J.G."/>
            <person name="Almeida N.F. Jr."/>
            <person name="Setubal J.C."/>
            <person name="Kitajima J.P."/>
        </authorList>
    </citation>
    <scope>NUCLEOTIDE SEQUENCE [LARGE SCALE GENOMIC DNA]</scope>
    <source>
        <strain>Temecula1 / ATCC 700964</strain>
    </source>
</reference>
<dbReference type="EMBL" id="AE009442">
    <property type="protein sequence ID" value="AAO29826.1"/>
    <property type="molecule type" value="Genomic_DNA"/>
</dbReference>
<dbReference type="RefSeq" id="WP_011098325.1">
    <property type="nucleotide sequence ID" value="NC_004556.1"/>
</dbReference>
<dbReference type="SMR" id="Q87A35"/>
<dbReference type="GeneID" id="93905858"/>
<dbReference type="KEGG" id="xft:PD_1997"/>
<dbReference type="HOGENOM" id="CLU_002794_4_1_6"/>
<dbReference type="Proteomes" id="UP000002516">
    <property type="component" value="Chromosome"/>
</dbReference>
<dbReference type="GO" id="GO:0005737">
    <property type="term" value="C:cytoplasm"/>
    <property type="evidence" value="ECO:0007669"/>
    <property type="project" value="UniProtKB-SubCell"/>
</dbReference>
<dbReference type="GO" id="GO:0005525">
    <property type="term" value="F:GTP binding"/>
    <property type="evidence" value="ECO:0007669"/>
    <property type="project" value="UniProtKB-UniRule"/>
</dbReference>
<dbReference type="GO" id="GO:0003924">
    <property type="term" value="F:GTPase activity"/>
    <property type="evidence" value="ECO:0007669"/>
    <property type="project" value="InterPro"/>
</dbReference>
<dbReference type="GO" id="GO:0097216">
    <property type="term" value="F:guanosine tetraphosphate binding"/>
    <property type="evidence" value="ECO:0007669"/>
    <property type="project" value="UniProtKB-ARBA"/>
</dbReference>
<dbReference type="GO" id="GO:0003746">
    <property type="term" value="F:translation elongation factor activity"/>
    <property type="evidence" value="ECO:0007669"/>
    <property type="project" value="UniProtKB-UniRule"/>
</dbReference>
<dbReference type="GO" id="GO:0032790">
    <property type="term" value="P:ribosome disassembly"/>
    <property type="evidence" value="ECO:0007669"/>
    <property type="project" value="TreeGrafter"/>
</dbReference>
<dbReference type="CDD" id="cd01886">
    <property type="entry name" value="EF-G"/>
    <property type="match status" value="1"/>
</dbReference>
<dbReference type="CDD" id="cd16262">
    <property type="entry name" value="EFG_III"/>
    <property type="match status" value="1"/>
</dbReference>
<dbReference type="CDD" id="cd01434">
    <property type="entry name" value="EFG_mtEFG1_IV"/>
    <property type="match status" value="1"/>
</dbReference>
<dbReference type="CDD" id="cd03713">
    <property type="entry name" value="EFG_mtEFG_C"/>
    <property type="match status" value="1"/>
</dbReference>
<dbReference type="CDD" id="cd04088">
    <property type="entry name" value="EFG_mtEFG_II"/>
    <property type="match status" value="1"/>
</dbReference>
<dbReference type="FunFam" id="2.40.30.10:FF:000006">
    <property type="entry name" value="Elongation factor G"/>
    <property type="match status" value="1"/>
</dbReference>
<dbReference type="FunFam" id="3.30.230.10:FF:000003">
    <property type="entry name" value="Elongation factor G"/>
    <property type="match status" value="1"/>
</dbReference>
<dbReference type="FunFam" id="3.30.70.240:FF:000001">
    <property type="entry name" value="Elongation factor G"/>
    <property type="match status" value="1"/>
</dbReference>
<dbReference type="FunFam" id="3.30.70.870:FF:000001">
    <property type="entry name" value="Elongation factor G"/>
    <property type="match status" value="1"/>
</dbReference>
<dbReference type="FunFam" id="3.40.50.300:FF:000029">
    <property type="entry name" value="Elongation factor G"/>
    <property type="match status" value="1"/>
</dbReference>
<dbReference type="Gene3D" id="3.30.230.10">
    <property type="match status" value="1"/>
</dbReference>
<dbReference type="Gene3D" id="3.30.70.240">
    <property type="match status" value="1"/>
</dbReference>
<dbReference type="Gene3D" id="3.30.70.870">
    <property type="entry name" value="Elongation Factor G (Translational Gtpase), domain 3"/>
    <property type="match status" value="1"/>
</dbReference>
<dbReference type="Gene3D" id="3.40.50.300">
    <property type="entry name" value="P-loop containing nucleotide triphosphate hydrolases"/>
    <property type="match status" value="1"/>
</dbReference>
<dbReference type="Gene3D" id="2.40.30.10">
    <property type="entry name" value="Translation factors"/>
    <property type="match status" value="1"/>
</dbReference>
<dbReference type="HAMAP" id="MF_00054_B">
    <property type="entry name" value="EF_G_EF_2_B"/>
    <property type="match status" value="1"/>
</dbReference>
<dbReference type="InterPro" id="IPR041095">
    <property type="entry name" value="EFG_II"/>
</dbReference>
<dbReference type="InterPro" id="IPR009022">
    <property type="entry name" value="EFG_III"/>
</dbReference>
<dbReference type="InterPro" id="IPR035647">
    <property type="entry name" value="EFG_III/V"/>
</dbReference>
<dbReference type="InterPro" id="IPR047872">
    <property type="entry name" value="EFG_IV"/>
</dbReference>
<dbReference type="InterPro" id="IPR035649">
    <property type="entry name" value="EFG_V"/>
</dbReference>
<dbReference type="InterPro" id="IPR000640">
    <property type="entry name" value="EFG_V-like"/>
</dbReference>
<dbReference type="InterPro" id="IPR004161">
    <property type="entry name" value="EFTu-like_2"/>
</dbReference>
<dbReference type="InterPro" id="IPR031157">
    <property type="entry name" value="G_TR_CS"/>
</dbReference>
<dbReference type="InterPro" id="IPR027417">
    <property type="entry name" value="P-loop_NTPase"/>
</dbReference>
<dbReference type="InterPro" id="IPR020568">
    <property type="entry name" value="Ribosomal_Su5_D2-typ_SF"/>
</dbReference>
<dbReference type="InterPro" id="IPR014721">
    <property type="entry name" value="Ribsml_uS5_D2-typ_fold_subgr"/>
</dbReference>
<dbReference type="InterPro" id="IPR005225">
    <property type="entry name" value="Small_GTP-bd"/>
</dbReference>
<dbReference type="InterPro" id="IPR000795">
    <property type="entry name" value="T_Tr_GTP-bd_dom"/>
</dbReference>
<dbReference type="InterPro" id="IPR009000">
    <property type="entry name" value="Transl_B-barrel_sf"/>
</dbReference>
<dbReference type="InterPro" id="IPR004540">
    <property type="entry name" value="Transl_elong_EFG/EF2"/>
</dbReference>
<dbReference type="InterPro" id="IPR005517">
    <property type="entry name" value="Transl_elong_EFG/EF2_IV"/>
</dbReference>
<dbReference type="NCBIfam" id="TIGR00484">
    <property type="entry name" value="EF-G"/>
    <property type="match status" value="1"/>
</dbReference>
<dbReference type="NCBIfam" id="NF009381">
    <property type="entry name" value="PRK12740.1-5"/>
    <property type="match status" value="1"/>
</dbReference>
<dbReference type="NCBIfam" id="TIGR00231">
    <property type="entry name" value="small_GTP"/>
    <property type="match status" value="1"/>
</dbReference>
<dbReference type="PANTHER" id="PTHR43261:SF1">
    <property type="entry name" value="RIBOSOME-RELEASING FACTOR 2, MITOCHONDRIAL"/>
    <property type="match status" value="1"/>
</dbReference>
<dbReference type="PANTHER" id="PTHR43261">
    <property type="entry name" value="TRANSLATION ELONGATION FACTOR G-RELATED"/>
    <property type="match status" value="1"/>
</dbReference>
<dbReference type="Pfam" id="PF00679">
    <property type="entry name" value="EFG_C"/>
    <property type="match status" value="1"/>
</dbReference>
<dbReference type="Pfam" id="PF14492">
    <property type="entry name" value="EFG_III"/>
    <property type="match status" value="1"/>
</dbReference>
<dbReference type="Pfam" id="PF03764">
    <property type="entry name" value="EFG_IV"/>
    <property type="match status" value="1"/>
</dbReference>
<dbReference type="Pfam" id="PF00009">
    <property type="entry name" value="GTP_EFTU"/>
    <property type="match status" value="1"/>
</dbReference>
<dbReference type="Pfam" id="PF03144">
    <property type="entry name" value="GTP_EFTU_D2"/>
    <property type="match status" value="1"/>
</dbReference>
<dbReference type="PRINTS" id="PR00315">
    <property type="entry name" value="ELONGATNFCT"/>
</dbReference>
<dbReference type="SMART" id="SM00838">
    <property type="entry name" value="EFG_C"/>
    <property type="match status" value="1"/>
</dbReference>
<dbReference type="SMART" id="SM00889">
    <property type="entry name" value="EFG_IV"/>
    <property type="match status" value="1"/>
</dbReference>
<dbReference type="SUPFAM" id="SSF54980">
    <property type="entry name" value="EF-G C-terminal domain-like"/>
    <property type="match status" value="2"/>
</dbReference>
<dbReference type="SUPFAM" id="SSF52540">
    <property type="entry name" value="P-loop containing nucleoside triphosphate hydrolases"/>
    <property type="match status" value="1"/>
</dbReference>
<dbReference type="SUPFAM" id="SSF54211">
    <property type="entry name" value="Ribosomal protein S5 domain 2-like"/>
    <property type="match status" value="1"/>
</dbReference>
<dbReference type="SUPFAM" id="SSF50447">
    <property type="entry name" value="Translation proteins"/>
    <property type="match status" value="1"/>
</dbReference>
<dbReference type="PROSITE" id="PS00301">
    <property type="entry name" value="G_TR_1"/>
    <property type="match status" value="1"/>
</dbReference>
<dbReference type="PROSITE" id="PS51722">
    <property type="entry name" value="G_TR_2"/>
    <property type="match status" value="1"/>
</dbReference>
<comment type="function">
    <text evidence="1">Catalyzes the GTP-dependent ribosomal translocation step during translation elongation. During this step, the ribosome changes from the pre-translocational (PRE) to the post-translocational (POST) state as the newly formed A-site-bound peptidyl-tRNA and P-site-bound deacylated tRNA move to the P and E sites, respectively. Catalyzes the coordinated movement of the two tRNA molecules, the mRNA and conformational changes in the ribosome.</text>
</comment>
<comment type="subcellular location">
    <subcellularLocation>
        <location evidence="1">Cytoplasm</location>
    </subcellularLocation>
</comment>
<comment type="similarity">
    <text evidence="1">Belongs to the TRAFAC class translation factor GTPase superfamily. Classic translation factor GTPase family. EF-G/EF-2 subfamily.</text>
</comment>
<gene>
    <name evidence="1" type="primary">fusA</name>
    <name type="ordered locus">PD_1997</name>
</gene>
<name>EFG_XYLFT</name>
<feature type="chain" id="PRO_0000091272" description="Elongation factor G">
    <location>
        <begin position="1"/>
        <end position="705"/>
    </location>
</feature>
<feature type="domain" description="tr-type G">
    <location>
        <begin position="8"/>
        <end position="290"/>
    </location>
</feature>
<feature type="binding site" evidence="1">
    <location>
        <begin position="17"/>
        <end position="24"/>
    </location>
    <ligand>
        <name>GTP</name>
        <dbReference type="ChEBI" id="CHEBI:37565"/>
    </ligand>
</feature>
<feature type="binding site" evidence="1">
    <location>
        <begin position="88"/>
        <end position="92"/>
    </location>
    <ligand>
        <name>GTP</name>
        <dbReference type="ChEBI" id="CHEBI:37565"/>
    </ligand>
</feature>
<feature type="binding site" evidence="1">
    <location>
        <begin position="142"/>
        <end position="145"/>
    </location>
    <ligand>
        <name>GTP</name>
        <dbReference type="ChEBI" id="CHEBI:37565"/>
    </ligand>
</feature>